<gene>
    <name type="primary">Slco3a1</name>
    <name type="synonym">Oatp3a1</name>
    <name type="synonym">Oatpd</name>
    <name type="synonym">Pgt2</name>
    <name type="synonym">Slc21a11</name>
</gene>
<feature type="chain" id="PRO_0000191066" description="Solute carrier organic anion transporter family member 3A1">
    <location>
        <begin position="1"/>
        <end position="710"/>
    </location>
</feature>
<feature type="topological domain" description="Cytoplasmic" evidence="2">
    <location>
        <begin position="1"/>
        <end position="40"/>
    </location>
</feature>
<feature type="transmembrane region" description="Helical; Name=1" evidence="2">
    <location>
        <begin position="41"/>
        <end position="60"/>
    </location>
</feature>
<feature type="topological domain" description="Extracellular" evidence="2">
    <location>
        <begin position="61"/>
        <end position="79"/>
    </location>
</feature>
<feature type="transmembrane region" description="Helical; Name=2" evidence="2">
    <location>
        <begin position="80"/>
        <end position="100"/>
    </location>
</feature>
<feature type="topological domain" description="Cytoplasmic" evidence="2">
    <location>
        <begin position="101"/>
        <end position="106"/>
    </location>
</feature>
<feature type="transmembrane region" description="Helical; Name=3" evidence="2">
    <location>
        <begin position="107"/>
        <end position="131"/>
    </location>
</feature>
<feature type="topological domain" description="Extracellular" evidence="2">
    <location>
        <begin position="132"/>
        <end position="174"/>
    </location>
</feature>
<feature type="transmembrane region" description="Helical; Name=4" evidence="2">
    <location>
        <begin position="175"/>
        <end position="203"/>
    </location>
</feature>
<feature type="topological domain" description="Cytoplasmic" evidence="2">
    <location>
        <begin position="204"/>
        <end position="222"/>
    </location>
</feature>
<feature type="transmembrane region" description="Helical; Name=5" evidence="2">
    <location>
        <begin position="223"/>
        <end position="243"/>
    </location>
</feature>
<feature type="topological domain" description="Extracellular" evidence="2">
    <location>
        <begin position="244"/>
        <end position="261"/>
    </location>
</feature>
<feature type="transmembrane region" description="Helical; Name=6" evidence="2">
    <location>
        <begin position="262"/>
        <end position="286"/>
    </location>
</feature>
<feature type="topological domain" description="Cytoplasmic" evidence="2">
    <location>
        <begin position="287"/>
        <end position="344"/>
    </location>
</feature>
<feature type="transmembrane region" description="Helical; Name=7" evidence="2">
    <location>
        <begin position="345"/>
        <end position="366"/>
    </location>
</feature>
<feature type="topological domain" description="Extracellular" evidence="2">
    <location>
        <begin position="367"/>
        <end position="386"/>
    </location>
</feature>
<feature type="transmembrane region" description="Helical; Name=8" evidence="2">
    <location>
        <begin position="387"/>
        <end position="410"/>
    </location>
</feature>
<feature type="topological domain" description="Cytoplasmic" evidence="2">
    <location>
        <begin position="411"/>
        <end position="414"/>
    </location>
</feature>
<feature type="transmembrane region" description="Helical; Name=9" evidence="2">
    <location>
        <begin position="415"/>
        <end position="438"/>
    </location>
</feature>
<feature type="topological domain" description="Extracellular" evidence="2">
    <location>
        <begin position="439"/>
        <end position="539"/>
    </location>
</feature>
<feature type="transmembrane region" description="Helical; Name=10" evidence="2">
    <location>
        <begin position="540"/>
        <end position="562"/>
    </location>
</feature>
<feature type="topological domain" description="Cytoplasmic" evidence="2">
    <location>
        <begin position="563"/>
        <end position="571"/>
    </location>
</feature>
<feature type="transmembrane region" description="Helical; Name=11" evidence="2">
    <location>
        <begin position="572"/>
        <end position="597"/>
    </location>
</feature>
<feature type="topological domain" description="Extracellular" evidence="2">
    <location>
        <begin position="598"/>
        <end position="630"/>
    </location>
</feature>
<feature type="transmembrane region" description="Helical; Name=12" evidence="2">
    <location>
        <begin position="631"/>
        <end position="648"/>
    </location>
</feature>
<feature type="topological domain" description="Cytoplasmic" evidence="2">
    <location>
        <begin position="649"/>
        <end position="705"/>
    </location>
</feature>
<feature type="domain" description="Kazal-like" evidence="3">
    <location>
        <begin position="465"/>
        <end position="513"/>
    </location>
</feature>
<feature type="region of interest" description="Disordered" evidence="4">
    <location>
        <begin position="1"/>
        <end position="25"/>
    </location>
</feature>
<feature type="compositionally biased region" description="Gly residues" evidence="4">
    <location>
        <begin position="1"/>
        <end position="15"/>
    </location>
</feature>
<feature type="modified residue" description="N-acetylmethionine" evidence="1">
    <location>
        <position position="1"/>
    </location>
</feature>
<feature type="glycosylation site" description="N-linked (GlcNAc...) asparagine" evidence="2">
    <location>
        <position position="153"/>
    </location>
</feature>
<feature type="glycosylation site" description="N-linked (GlcNAc...) asparagine" evidence="2">
    <location>
        <position position="169"/>
    </location>
</feature>
<feature type="glycosylation site" description="N-linked (GlcNAc...) asparagine" evidence="2">
    <location>
        <position position="381"/>
    </location>
</feature>
<feature type="glycosylation site" description="N-linked (GlcNAc...) asparagine" evidence="2">
    <location>
        <position position="457"/>
    </location>
</feature>
<feature type="glycosylation site" description="N-linked (GlcNAc...) asparagine" evidence="2">
    <location>
        <position position="502"/>
    </location>
</feature>
<feature type="glycosylation site" description="N-linked (GlcNAc...) asparagine" evidence="2">
    <location>
        <position position="505"/>
    </location>
</feature>
<feature type="glycosylation site" description="N-linked (GlcNAc...) asparagine" evidence="2">
    <location>
        <position position="519"/>
    </location>
</feature>
<feature type="disulfide bond" evidence="3">
    <location>
        <begin position="471"/>
        <end position="501"/>
    </location>
</feature>
<feature type="disulfide bond" evidence="3">
    <location>
        <begin position="477"/>
        <end position="497"/>
    </location>
</feature>
<feature type="disulfide bond" evidence="3">
    <location>
        <begin position="486"/>
        <end position="511"/>
    </location>
</feature>
<keyword id="KW-0007">Acetylation</keyword>
<keyword id="KW-1003">Cell membrane</keyword>
<keyword id="KW-1015">Disulfide bond</keyword>
<keyword id="KW-0325">Glycoprotein</keyword>
<keyword id="KW-0406">Ion transport</keyword>
<keyword id="KW-0472">Membrane</keyword>
<keyword id="KW-1185">Reference proteome</keyword>
<keyword id="KW-0812">Transmembrane</keyword>
<keyword id="KW-1133">Transmembrane helix</keyword>
<keyword id="KW-0813">Transport</keyword>
<proteinExistence type="evidence at protein level"/>
<name>SO3A1_RAT</name>
<sequence length="710" mass="76825">MQGKKPGGSSGGGRSGELQGDEAQRNKKKKKKVSCFSNIKIFLVSECALMLAQGTVGAYLVSVLTTLERRFNLQSADVGVIASSFEIGNLALILFVSYFGARGHRPRLIGCGGIVMALGALLSALPEFLTHQYKYEAGEIRWGAEGRDVCATNGSSSDEGPDPDLICRNRTATNMMYLLLIGAQVLLGIGATPVQPLGVSYIDDHVRRKDSSLYIGILFTMLVFGPACGFILGSFCTKIYVDAVFIDTSNLDITPDDPRWIGAWWGGFLLCGALLFFSSLLMFGFPQSLPPHSEPGMESEQAMLPEREYERPKPSNGVLRHPLEPDSSASCFQQLRVIPKVTKHLLSNPVFTCIVLAACMEIAVVAGFAAFLGKYLEQQFNLTTSSANQLLGMTAIPCACLGIFLGGLLVKKLSLSALGAIRMAMLVNLVSTACYVSFLFLGCDTVPVAGVTVRYGNNSARGSPLDPYSPCNNNCECQTDSFTPVCGADGITYLSACFAGCNSTNLTGCACLTTVPPENATVVPGKCPSPGCQEAFLTFLCVMCVCSLIGAMAQTPSVIILIRTVSPELKSYALGVLFLLLRLLGFIPPPLIFGAGIDSTCLFWSTFCGEQGACVLYDNVVYRYLYVSIAIALKSFAFILYTTTWQCLRKNYKRYIKNHEGGLSTSEFLASTLTLDNLGRDPVPAHQTHRTKFIYNLEDHEWCENMESVL</sequence>
<comment type="function">
    <text evidence="1 5 7">Putative organic anion antiporter with apparent broad substrate specificity. Recognizes various substrates including thyroid hormone L-thyroxine, prostanoids such as prostaglandin E1 and E2, bile acids such as taurocholate, glycolate and glycochenodeoxycholate and peptide hormones such as L-arginine vasopressin, likely operating in a tissue-specific manner (By similarity) (PubMed:14631946). The transport mechanism, its electrogenicity and potential tissue-specific counterions remain to be elucidated (Probable).</text>
</comment>
<comment type="catalytic activity">
    <reaction evidence="1">
        <text>L-thyroxine(out) = L-thyroxine(in)</text>
        <dbReference type="Rhea" id="RHEA:71819"/>
        <dbReference type="ChEBI" id="CHEBI:58448"/>
    </reaction>
    <physiologicalReaction direction="left-to-right" evidence="1">
        <dbReference type="Rhea" id="RHEA:71820"/>
    </physiologicalReaction>
</comment>
<comment type="catalytic activity">
    <reaction evidence="5">
        <text>prostaglandin E1(out) = prostaglandin E1(in)</text>
        <dbReference type="Rhea" id="RHEA:50980"/>
        <dbReference type="ChEBI" id="CHEBI:57397"/>
    </reaction>
    <physiologicalReaction direction="left-to-right" evidence="8">
        <dbReference type="Rhea" id="RHEA:50981"/>
    </physiologicalReaction>
</comment>
<comment type="catalytic activity">
    <reaction evidence="5">
        <text>prostaglandin E2(out) = prostaglandin E2(in)</text>
        <dbReference type="Rhea" id="RHEA:50984"/>
        <dbReference type="ChEBI" id="CHEBI:606564"/>
    </reaction>
    <physiologicalReaction direction="left-to-right" evidence="8">
        <dbReference type="Rhea" id="RHEA:50985"/>
    </physiologicalReaction>
</comment>
<comment type="catalytic activity">
    <reaction evidence="5">
        <text>prostaglandin F2alpha(out) = prostaglandin F2alpha(in)</text>
        <dbReference type="Rhea" id="RHEA:50988"/>
        <dbReference type="ChEBI" id="CHEBI:57404"/>
    </reaction>
    <physiologicalReaction direction="left-to-right" evidence="8">
        <dbReference type="Rhea" id="RHEA:50989"/>
    </physiologicalReaction>
</comment>
<comment type="catalytic activity">
    <reaction evidence="1">
        <text>(5Z,8Z,11Z,14Z)-eicosatetraenoate(out) = (5Z,8Z,11Z,14Z)-eicosatetraenoate(in)</text>
        <dbReference type="Rhea" id="RHEA:71395"/>
        <dbReference type="ChEBI" id="CHEBI:32395"/>
    </reaction>
    <physiologicalReaction direction="left-to-right" evidence="1">
        <dbReference type="Rhea" id="RHEA:71396"/>
    </physiologicalReaction>
</comment>
<comment type="catalytic activity">
    <reaction evidence="1">
        <text>taurocholate(out) = taurocholate(in)</text>
        <dbReference type="Rhea" id="RHEA:71703"/>
        <dbReference type="ChEBI" id="CHEBI:36257"/>
    </reaction>
    <physiologicalReaction direction="right-to-left" evidence="1">
        <dbReference type="Rhea" id="RHEA:71705"/>
    </physiologicalReaction>
</comment>
<comment type="catalytic activity">
    <reaction evidence="1">
        <text>glycocholate(out) = glycocholate(in)</text>
        <dbReference type="Rhea" id="RHEA:71851"/>
        <dbReference type="ChEBI" id="CHEBI:29746"/>
    </reaction>
    <physiologicalReaction direction="right-to-left" evidence="1">
        <dbReference type="Rhea" id="RHEA:71853"/>
    </physiologicalReaction>
</comment>
<comment type="catalytic activity">
    <reaction evidence="1">
        <text>estrone 3-sulfate(out) = estrone 3-sulfate(in)</text>
        <dbReference type="Rhea" id="RHEA:71835"/>
        <dbReference type="ChEBI" id="CHEBI:60050"/>
    </reaction>
    <physiologicalReaction direction="left-to-right" evidence="1">
        <dbReference type="Rhea" id="RHEA:71836"/>
    </physiologicalReaction>
</comment>
<comment type="catalytic activity">
    <reaction evidence="1">
        <text>argipressin(out) = argipressin(in)</text>
        <dbReference type="Rhea" id="RHEA:75979"/>
        <dbReference type="ChEBI" id="CHEBI:194507"/>
    </reaction>
    <physiologicalReaction direction="left-to-right" evidence="1">
        <dbReference type="Rhea" id="RHEA:75980"/>
    </physiologicalReaction>
</comment>
<comment type="subcellular location">
    <subcellularLocation>
        <location evidence="1">Basolateral cell membrane</location>
        <topology evidence="2">Multi-pass membrane protein</topology>
    </subcellularLocation>
    <subcellularLocation>
        <location evidence="1">Apical cell membrane</location>
        <topology evidence="2">Multi-pass membrane protein</topology>
    </subcellularLocation>
    <subcellularLocation>
        <location evidence="1">Basal cell membrane</location>
        <topology evidence="2">Multi-pass membrane protein</topology>
    </subcellularLocation>
</comment>
<comment type="tissue specificity">
    <text evidence="5 6">Expressed in many brain regions, including frontal cortex, brain stem and cerebellum. Associated with neuronal bodies in a punctated matter. Detected at the arcuate nucleus and the choroid plexus (at protein level). Little expression, if any, in oligodendrocytes. In the cardiovascular system, detected in cardiac muscle cells and endothelial cells of aorta, coronary artery and left ventricular endocardium (at protein level). In the respiratory system, detected in alveolar epithelial cells and in mucosal epithelium of the trachea (at protein level). In the reproductive system, detected in spermatozoa, oocytes, smooth muscle cells of the ovary, epithelium of the glandula uterine, smooth muscle cells of the myometrium and epithelium of the endometrium (at protein level). In the kidney, detected in afferent and efferent arterioles, and the epithelium of distal tubules and collecting tubules (at protein level).</text>
</comment>
<comment type="similarity">
    <text evidence="7">Belongs to the organo anion transporter (TC 2.A.60) family.</text>
</comment>
<protein>
    <recommendedName>
        <fullName>Solute carrier organic anion transporter family member 3A1</fullName>
    </recommendedName>
    <alternativeName>
        <fullName>Organic anion-transporting polypeptide D</fullName>
        <shortName>OATP-D</shortName>
    </alternativeName>
    <alternativeName>
        <fullName>Prostaglandin transporter subtype 2</fullName>
    </alternativeName>
    <alternativeName>
        <fullName>Sodium-independent organic anion transporter D</fullName>
    </alternativeName>
    <alternativeName>
        <fullName>Solute carrier family 21 member 11</fullName>
    </alternativeName>
</protein>
<organism>
    <name type="scientific">Rattus norvegicus</name>
    <name type="common">Rat</name>
    <dbReference type="NCBI Taxonomy" id="10116"/>
    <lineage>
        <taxon>Eukaryota</taxon>
        <taxon>Metazoa</taxon>
        <taxon>Chordata</taxon>
        <taxon>Craniata</taxon>
        <taxon>Vertebrata</taxon>
        <taxon>Euteleostomi</taxon>
        <taxon>Mammalia</taxon>
        <taxon>Eutheria</taxon>
        <taxon>Euarchontoglires</taxon>
        <taxon>Glires</taxon>
        <taxon>Rodentia</taxon>
        <taxon>Myomorpha</taxon>
        <taxon>Muroidea</taxon>
        <taxon>Muridae</taxon>
        <taxon>Murinae</taxon>
        <taxon>Rattus</taxon>
    </lineage>
</organism>
<dbReference type="EMBL" id="AF239219">
    <property type="protein sequence ID" value="AAK15063.1"/>
    <property type="molecule type" value="mRNA"/>
</dbReference>
<dbReference type="RefSeq" id="NP_803434.1">
    <property type="nucleotide sequence ID" value="NM_177481.1"/>
</dbReference>
<dbReference type="SMR" id="Q99N02"/>
<dbReference type="FunCoup" id="Q99N02">
    <property type="interactions" value="580"/>
</dbReference>
<dbReference type="STRING" id="10116.ENSRNOP00000049659"/>
<dbReference type="ChEMBL" id="CHEMBL2073689"/>
<dbReference type="GlyCosmos" id="Q99N02">
    <property type="glycosylation" value="7 sites, No reported glycans"/>
</dbReference>
<dbReference type="GlyGen" id="Q99N02">
    <property type="glycosylation" value="8 sites"/>
</dbReference>
<dbReference type="PhosphoSitePlus" id="Q99N02"/>
<dbReference type="jPOST" id="Q99N02"/>
<dbReference type="PaxDb" id="10116-ENSRNOP00000049659"/>
<dbReference type="GeneID" id="140915"/>
<dbReference type="KEGG" id="rno:140915"/>
<dbReference type="UCSC" id="RGD:620227">
    <property type="organism name" value="rat"/>
</dbReference>
<dbReference type="AGR" id="RGD:620227"/>
<dbReference type="CTD" id="28232"/>
<dbReference type="RGD" id="620227">
    <property type="gene designation" value="Slco3a1"/>
</dbReference>
<dbReference type="eggNOG" id="KOG3626">
    <property type="taxonomic scope" value="Eukaryota"/>
</dbReference>
<dbReference type="InParanoid" id="Q99N02"/>
<dbReference type="PhylomeDB" id="Q99N02"/>
<dbReference type="Reactome" id="R-RNO-879518">
    <property type="pathway name" value="Transport of organic anions"/>
</dbReference>
<dbReference type="PRO" id="PR:Q99N02"/>
<dbReference type="Proteomes" id="UP000002494">
    <property type="component" value="Unplaced"/>
</dbReference>
<dbReference type="GO" id="GO:0016324">
    <property type="term" value="C:apical plasma membrane"/>
    <property type="evidence" value="ECO:0007669"/>
    <property type="project" value="UniProtKB-SubCell"/>
</dbReference>
<dbReference type="GO" id="GO:0009925">
    <property type="term" value="C:basal plasma membrane"/>
    <property type="evidence" value="ECO:0000250"/>
    <property type="project" value="UniProtKB"/>
</dbReference>
<dbReference type="GO" id="GO:0016323">
    <property type="term" value="C:basolateral plasma membrane"/>
    <property type="evidence" value="ECO:0000318"/>
    <property type="project" value="GO_Central"/>
</dbReference>
<dbReference type="GO" id="GO:0005886">
    <property type="term" value="C:plasma membrane"/>
    <property type="evidence" value="ECO:0000266"/>
    <property type="project" value="RGD"/>
</dbReference>
<dbReference type="GO" id="GO:0008514">
    <property type="term" value="F:organic anion transmembrane transporter activity"/>
    <property type="evidence" value="ECO:0000250"/>
    <property type="project" value="UniProtKB"/>
</dbReference>
<dbReference type="GO" id="GO:0015132">
    <property type="term" value="F:prostaglandin transmembrane transporter activity"/>
    <property type="evidence" value="ECO:0000250"/>
    <property type="project" value="UniProtKB"/>
</dbReference>
<dbReference type="GO" id="GO:0015347">
    <property type="term" value="F:sodium-independent organic anion transmembrane transporter activity"/>
    <property type="evidence" value="ECO:0000318"/>
    <property type="project" value="GO_Central"/>
</dbReference>
<dbReference type="GO" id="GO:0006811">
    <property type="term" value="P:monoatomic ion transport"/>
    <property type="evidence" value="ECO:0007669"/>
    <property type="project" value="UniProtKB-KW"/>
</dbReference>
<dbReference type="GO" id="GO:0043123">
    <property type="term" value="P:positive regulation of canonical NF-kappaB signal transduction"/>
    <property type="evidence" value="ECO:0000266"/>
    <property type="project" value="RGD"/>
</dbReference>
<dbReference type="GO" id="GO:0043410">
    <property type="term" value="P:positive regulation of MAPK cascade"/>
    <property type="evidence" value="ECO:0000266"/>
    <property type="project" value="RGD"/>
</dbReference>
<dbReference type="GO" id="GO:0015732">
    <property type="term" value="P:prostaglandin transport"/>
    <property type="evidence" value="ECO:0000314"/>
    <property type="project" value="RGD"/>
</dbReference>
<dbReference type="GO" id="GO:0043252">
    <property type="term" value="P:sodium-independent organic anion transport"/>
    <property type="evidence" value="ECO:0000318"/>
    <property type="project" value="GO_Central"/>
</dbReference>
<dbReference type="CDD" id="cd17402">
    <property type="entry name" value="MFS_SLCO3_OATP3"/>
    <property type="match status" value="1"/>
</dbReference>
<dbReference type="Gene3D" id="1.20.1250.20">
    <property type="entry name" value="MFS general substrate transporter like domains"/>
    <property type="match status" value="1"/>
</dbReference>
<dbReference type="InterPro" id="IPR002350">
    <property type="entry name" value="Kazal_dom"/>
</dbReference>
<dbReference type="InterPro" id="IPR036058">
    <property type="entry name" value="Kazal_dom_sf"/>
</dbReference>
<dbReference type="InterPro" id="IPR036259">
    <property type="entry name" value="MFS_trans_sf"/>
</dbReference>
<dbReference type="InterPro" id="IPR004156">
    <property type="entry name" value="OATP"/>
</dbReference>
<dbReference type="NCBIfam" id="TIGR00805">
    <property type="entry name" value="oat"/>
    <property type="match status" value="1"/>
</dbReference>
<dbReference type="PANTHER" id="PTHR11388">
    <property type="entry name" value="ORGANIC ANION TRANSPORTER"/>
    <property type="match status" value="1"/>
</dbReference>
<dbReference type="PANTHER" id="PTHR11388:SF86">
    <property type="entry name" value="SOLUTE CARRIER ORGANIC ANION TRANSPORTER FAMILY MEMBER 3A1"/>
    <property type="match status" value="1"/>
</dbReference>
<dbReference type="Pfam" id="PF07648">
    <property type="entry name" value="Kazal_2"/>
    <property type="match status" value="1"/>
</dbReference>
<dbReference type="Pfam" id="PF03137">
    <property type="entry name" value="OATP"/>
    <property type="match status" value="1"/>
</dbReference>
<dbReference type="SUPFAM" id="SSF100895">
    <property type="entry name" value="Kazal-type serine protease inhibitors"/>
    <property type="match status" value="1"/>
</dbReference>
<dbReference type="SUPFAM" id="SSF103473">
    <property type="entry name" value="MFS general substrate transporter"/>
    <property type="match status" value="1"/>
</dbReference>
<dbReference type="PROSITE" id="PS51465">
    <property type="entry name" value="KAZAL_2"/>
    <property type="match status" value="1"/>
</dbReference>
<reference key="1">
    <citation type="submission" date="2000-02" db="EMBL/GenBank/DDBJ databases">
        <title>Molecular identification of a novel human prostaglandin transporter PGT2.</title>
        <authorList>
            <person name="Adachi H."/>
            <person name="Abe T."/>
        </authorList>
    </citation>
    <scope>NUCLEOTIDE SEQUENCE [MRNA]</scope>
</reference>
<reference key="2">
    <citation type="journal article" date="2003" name="Am. J. Physiol.">
        <title>Molecular characterization of human and rat organic anion transporter OATP-D.</title>
        <authorList>
            <person name="Adachi H."/>
            <person name="Suzuki T."/>
            <person name="Abe M."/>
            <person name="Asano N."/>
            <person name="Mizutamari H."/>
            <person name="Tanemoto M."/>
            <person name="Nishio T."/>
            <person name="Onogawa T."/>
            <person name="Toyohara T."/>
            <person name="Kasai S."/>
            <person name="Satoh F."/>
            <person name="Suzuki M."/>
            <person name="Tokui T."/>
            <person name="Unno M."/>
            <person name="Shimosegawa T."/>
            <person name="Matsuno S."/>
            <person name="Ito S."/>
            <person name="Abe T."/>
        </authorList>
    </citation>
    <scope>FUNCTION</scope>
    <scope>TRANSPORTER ACTIVITY</scope>
    <scope>TISSUE SPECIFICITY</scope>
</reference>
<reference key="3">
    <citation type="journal article" date="2007" name="Am. J. Physiol.">
        <title>Characterization of two splice variants of human organic anion transporting polypeptide 3A1 isolated from human brain.</title>
        <authorList>
            <person name="Huber R.D."/>
            <person name="Gao B."/>
            <person name="Sidler Pfaendler M.-A."/>
            <person name="Zhang-Fu W."/>
            <person name="Leuthold S."/>
            <person name="Hagenbuch B."/>
            <person name="Folkers G."/>
            <person name="Meier P.J."/>
            <person name="Stieger B."/>
        </authorList>
    </citation>
    <scope>TISSUE SPECIFICITY</scope>
</reference>
<evidence type="ECO:0000250" key="1">
    <source>
        <dbReference type="UniProtKB" id="Q9UIG8"/>
    </source>
</evidence>
<evidence type="ECO:0000255" key="2"/>
<evidence type="ECO:0000255" key="3">
    <source>
        <dbReference type="PROSITE-ProRule" id="PRU00798"/>
    </source>
</evidence>
<evidence type="ECO:0000256" key="4">
    <source>
        <dbReference type="SAM" id="MobiDB-lite"/>
    </source>
</evidence>
<evidence type="ECO:0000269" key="5">
    <source>
    </source>
</evidence>
<evidence type="ECO:0000269" key="6">
    <source>
    </source>
</evidence>
<evidence type="ECO:0000305" key="7"/>
<evidence type="ECO:0000305" key="8">
    <source>
    </source>
</evidence>
<accession>Q99N02</accession>